<organism>
    <name type="scientific">Scheffersomyces stipitis (strain ATCC 58785 / CBS 6054 / NBRC 10063 / NRRL Y-11545)</name>
    <name type="common">Yeast</name>
    <name type="synonym">Pichia stipitis</name>
    <dbReference type="NCBI Taxonomy" id="322104"/>
    <lineage>
        <taxon>Eukaryota</taxon>
        <taxon>Fungi</taxon>
        <taxon>Dikarya</taxon>
        <taxon>Ascomycota</taxon>
        <taxon>Saccharomycotina</taxon>
        <taxon>Pichiomycetes</taxon>
        <taxon>Debaryomycetaceae</taxon>
        <taxon>Scheffersomyces</taxon>
    </lineage>
</organism>
<proteinExistence type="inferred from homology"/>
<protein>
    <recommendedName>
        <fullName>Putative tyrosine-protein phosphatase OCA1</fullName>
        <ecNumber>3.1.3.48</ecNumber>
    </recommendedName>
</protein>
<gene>
    <name type="primary">OCA1</name>
    <name type="ORF">PICST_46361</name>
</gene>
<name>OCA1_PICST</name>
<comment type="function">
    <text evidence="1">Putative tyrosine-protein phosphatase required for protection against superoxide stress.</text>
</comment>
<comment type="catalytic activity">
    <reaction>
        <text>O-phospho-L-tyrosyl-[protein] + H2O = L-tyrosyl-[protein] + phosphate</text>
        <dbReference type="Rhea" id="RHEA:10684"/>
        <dbReference type="Rhea" id="RHEA-COMP:10136"/>
        <dbReference type="Rhea" id="RHEA-COMP:20101"/>
        <dbReference type="ChEBI" id="CHEBI:15377"/>
        <dbReference type="ChEBI" id="CHEBI:43474"/>
        <dbReference type="ChEBI" id="CHEBI:46858"/>
        <dbReference type="ChEBI" id="CHEBI:61978"/>
        <dbReference type="EC" id="3.1.3.48"/>
    </reaction>
</comment>
<comment type="subcellular location">
    <subcellularLocation>
        <location evidence="1">Cytoplasm</location>
    </subcellularLocation>
</comment>
<comment type="similarity">
    <text evidence="4">Belongs to the protein-tyrosine phosphatase family.</text>
</comment>
<dbReference type="EC" id="3.1.3.48"/>
<dbReference type="EMBL" id="CP000499">
    <property type="protein sequence ID" value="ABN66907.1"/>
    <property type="molecule type" value="Genomic_DNA"/>
</dbReference>
<dbReference type="RefSeq" id="XP_001384936.1">
    <property type="nucleotide sequence ID" value="XM_001384899.1"/>
</dbReference>
<dbReference type="SMR" id="A3LW52"/>
<dbReference type="FunCoup" id="A3LW52">
    <property type="interactions" value="49"/>
</dbReference>
<dbReference type="STRING" id="322104.A3LW52"/>
<dbReference type="GeneID" id="4839644"/>
<dbReference type="KEGG" id="pic:PICST_46361"/>
<dbReference type="eggNOG" id="KOG1572">
    <property type="taxonomic scope" value="Eukaryota"/>
</dbReference>
<dbReference type="HOGENOM" id="CLU_047845_2_2_1"/>
<dbReference type="InParanoid" id="A3LW52"/>
<dbReference type="OMA" id="PWNPISE"/>
<dbReference type="OrthoDB" id="6375174at2759"/>
<dbReference type="Proteomes" id="UP000002258">
    <property type="component" value="Chromosome 5"/>
</dbReference>
<dbReference type="GO" id="GO:0005737">
    <property type="term" value="C:cytoplasm"/>
    <property type="evidence" value="ECO:0007669"/>
    <property type="project" value="UniProtKB-SubCell"/>
</dbReference>
<dbReference type="GO" id="GO:0004725">
    <property type="term" value="F:protein tyrosine phosphatase activity"/>
    <property type="evidence" value="ECO:0007669"/>
    <property type="project" value="UniProtKB-EC"/>
</dbReference>
<dbReference type="GO" id="GO:0034599">
    <property type="term" value="P:cellular response to oxidative stress"/>
    <property type="evidence" value="ECO:0007669"/>
    <property type="project" value="EnsemblFungi"/>
</dbReference>
<dbReference type="CDD" id="cd14531">
    <property type="entry name" value="PFA-DSP_Oca1"/>
    <property type="match status" value="1"/>
</dbReference>
<dbReference type="FunFam" id="3.90.190.10:FF:000035">
    <property type="entry name" value="Tyrosine phosphatase, putative"/>
    <property type="match status" value="1"/>
</dbReference>
<dbReference type="Gene3D" id="3.90.190.10">
    <property type="entry name" value="Protein tyrosine phosphatase superfamily"/>
    <property type="match status" value="1"/>
</dbReference>
<dbReference type="InterPro" id="IPR020428">
    <property type="entry name" value="PFA-DSPs"/>
</dbReference>
<dbReference type="InterPro" id="IPR029021">
    <property type="entry name" value="Prot-tyrosine_phosphatase-like"/>
</dbReference>
<dbReference type="InterPro" id="IPR004861">
    <property type="entry name" value="Siw14-like"/>
</dbReference>
<dbReference type="InterPro" id="IPR020422">
    <property type="entry name" value="TYR_PHOSPHATASE_DUAL_dom"/>
</dbReference>
<dbReference type="PANTHER" id="PTHR31126">
    <property type="entry name" value="TYROSINE-PROTEIN PHOSPHATASE"/>
    <property type="match status" value="1"/>
</dbReference>
<dbReference type="PANTHER" id="PTHR31126:SF8">
    <property type="entry name" value="TYROSINE-PROTEIN PHOSPHATASE OCA1-RELATED"/>
    <property type="match status" value="1"/>
</dbReference>
<dbReference type="Pfam" id="PF03162">
    <property type="entry name" value="Y_phosphatase2"/>
    <property type="match status" value="1"/>
</dbReference>
<dbReference type="PRINTS" id="PR01911">
    <property type="entry name" value="PFDSPHPHTASE"/>
</dbReference>
<dbReference type="SUPFAM" id="SSF52799">
    <property type="entry name" value="(Phosphotyrosine protein) phosphatases II"/>
    <property type="match status" value="1"/>
</dbReference>
<dbReference type="PROSITE" id="PS50054">
    <property type="entry name" value="TYR_PHOSPHATASE_DUAL"/>
    <property type="match status" value="1"/>
</dbReference>
<reference key="1">
    <citation type="journal article" date="2007" name="Nat. Biotechnol.">
        <title>Genome sequence of the lignocellulose-bioconverting and xylose-fermenting yeast Pichia stipitis.</title>
        <authorList>
            <person name="Jeffries T.W."/>
            <person name="Grigoriev I.V."/>
            <person name="Grimwood J."/>
            <person name="Laplaza J.M."/>
            <person name="Aerts A."/>
            <person name="Salamov A."/>
            <person name="Schmutz J."/>
            <person name="Lindquist E."/>
            <person name="Dehal P."/>
            <person name="Shapiro H."/>
            <person name="Jin Y.-S."/>
            <person name="Passoth V."/>
            <person name="Richardson P.M."/>
        </authorList>
    </citation>
    <scope>NUCLEOTIDE SEQUENCE [LARGE SCALE GENOMIC DNA]</scope>
    <source>
        <strain>ATCC 58785 / CBS 6054 / NBRC 10063 / NRRL Y-11545</strain>
    </source>
</reference>
<sequence>MSNKDTSILKGNVDHEEADSNPKLRKIGRPPALRIIPPLNFCPVERQLYRSGQPSAINQSFLEQLNLKTILWLASEEPQDDFLEFSNDHNINIEFVGIINEFSNYQNYNTNQTLTVNPWDALNEQTIKRALELIVNRENYPLLVCCGMGRHRTGTVIGCLRRLQGWNLASVSEEYRRFTGARGGRILVELLIESFDIGSVEIDPSKVPDWLT</sequence>
<keyword id="KW-0963">Cytoplasm</keyword>
<keyword id="KW-0378">Hydrolase</keyword>
<keyword id="KW-0904">Protein phosphatase</keyword>
<keyword id="KW-1185">Reference proteome</keyword>
<keyword id="KW-0346">Stress response</keyword>
<feature type="chain" id="PRO_0000333394" description="Putative tyrosine-protein phosphatase OCA1">
    <location>
        <begin position="1"/>
        <end position="212"/>
    </location>
</feature>
<feature type="domain" description="Tyrosine-protein phosphatase" evidence="2">
    <location>
        <begin position="40"/>
        <end position="208"/>
    </location>
</feature>
<feature type="region of interest" description="Disordered" evidence="3">
    <location>
        <begin position="1"/>
        <end position="27"/>
    </location>
</feature>
<feature type="compositionally biased region" description="Basic and acidic residues" evidence="3">
    <location>
        <begin position="12"/>
        <end position="22"/>
    </location>
</feature>
<feature type="active site" description="Phosphocysteine intermediate" evidence="2">
    <location>
        <position position="146"/>
    </location>
</feature>
<accession>A3LW52</accession>
<evidence type="ECO:0000250" key="1"/>
<evidence type="ECO:0000255" key="2">
    <source>
        <dbReference type="PROSITE-ProRule" id="PRU00160"/>
    </source>
</evidence>
<evidence type="ECO:0000256" key="3">
    <source>
        <dbReference type="SAM" id="MobiDB-lite"/>
    </source>
</evidence>
<evidence type="ECO:0000305" key="4"/>